<name>GSOX5_ARATH</name>
<gene>
    <name type="primary">FMOGS-OX5</name>
    <name type="ordered locus">At1g12140</name>
    <name type="ORF">T28K15.12</name>
</gene>
<accession>A8MRX0</accession>
<accession>Q9FWW4</accession>
<evidence type="ECO:0000255" key="1"/>
<evidence type="ECO:0000269" key="2">
    <source>
    </source>
</evidence>
<evidence type="ECO:0000305" key="3"/>
<sequence length="459" mass="52104">MAPARTRVNSLNVAVIGAGAAGLVAARELRRENHTVVVFERDSKVGGLWVYTPNSEPDPLSLDPNRTIVHSSVYDSLRTNLPRECMGYRDFPFVPRPEDDESRDSRRYPSHREVLAYLEDFAREFKLVEMVRFKTEVVLVEPEDKKWRVQSKNSDGISKDEIFDAVVVCNGHYTEPRVAHVPGIDSWPGKQIHSHNYRVPDQFKDQVVVVIGNFASGADISRDITGVAKEVHIASRSNPSKTYSKLPGSNNLWLHSMIESVHEDGTIVFQNGKVVQADTIVHCTGYKYHFPFLNTNGYITVEDNCVGPLYEHVFPPALAPGLSFIGLPWMTLQFFMFELQSKWVAAALSGRVTLPSEEKMMEDVTAYYAKREAFGQPKRYTHRLGGGQVDYLNWIAEQIGAPPGEQWRYQEINGGYYRLATQSDTFRDKWDDDHLIVEAYEDFLRQKLISSLPSQLLES</sequence>
<keyword id="KW-0025">Alternative splicing</keyword>
<keyword id="KW-0274">FAD</keyword>
<keyword id="KW-0285">Flavoprotein</keyword>
<keyword id="KW-0503">Monooxygenase</keyword>
<keyword id="KW-0521">NADP</keyword>
<keyword id="KW-0560">Oxidoreductase</keyword>
<keyword id="KW-1185">Reference proteome</keyword>
<proteinExistence type="evidence at protein level"/>
<organism>
    <name type="scientific">Arabidopsis thaliana</name>
    <name type="common">Mouse-ear cress</name>
    <dbReference type="NCBI Taxonomy" id="3702"/>
    <lineage>
        <taxon>Eukaryota</taxon>
        <taxon>Viridiplantae</taxon>
        <taxon>Streptophyta</taxon>
        <taxon>Embryophyta</taxon>
        <taxon>Tracheophyta</taxon>
        <taxon>Spermatophyta</taxon>
        <taxon>Magnoliopsida</taxon>
        <taxon>eudicotyledons</taxon>
        <taxon>Gunneridae</taxon>
        <taxon>Pentapetalae</taxon>
        <taxon>rosids</taxon>
        <taxon>malvids</taxon>
        <taxon>Brassicales</taxon>
        <taxon>Brassicaceae</taxon>
        <taxon>Camelineae</taxon>
        <taxon>Arabidopsis</taxon>
    </lineage>
</organism>
<comment type="function">
    <text evidence="2">Catalyzes the conversion of methylthioalkyl glucosinolates into methylsulfinylalkyl glucosinolates. Specific for 8-methylthiooctyl (8-MTO) glucosinolates.</text>
</comment>
<comment type="catalytic activity">
    <reaction evidence="2">
        <text>a (Z)-omega-(methylsulfanyl)-N-sulfo-alkylhydroximate S-glucoside + NADPH + O2 + H(+) = a (Z)-omega-(methylsulfinyl)-alkyl-glucosinolate + NADP(+) + H2O</text>
        <dbReference type="Rhea" id="RHEA:42208"/>
        <dbReference type="Rhea" id="RHEA-COMP:13194"/>
        <dbReference type="Rhea" id="RHEA-COMP:13195"/>
        <dbReference type="ChEBI" id="CHEBI:15377"/>
        <dbReference type="ChEBI" id="CHEBI:15378"/>
        <dbReference type="ChEBI" id="CHEBI:15379"/>
        <dbReference type="ChEBI" id="CHEBI:57783"/>
        <dbReference type="ChEBI" id="CHEBI:58349"/>
        <dbReference type="ChEBI" id="CHEBI:136434"/>
        <dbReference type="ChEBI" id="CHEBI:136435"/>
        <dbReference type="EC" id="1.14.13.237"/>
    </reaction>
</comment>
<comment type="alternative products">
    <event type="alternative splicing"/>
    <isoform>
        <id>A8MRX0-1</id>
        <name>1</name>
        <sequence type="displayed"/>
    </isoform>
    <isoform>
        <id>A8MRX0-2</id>
        <name>2</name>
        <sequence type="described" ref="VSP_036206"/>
    </isoform>
</comment>
<comment type="disruption phenotype">
    <text evidence="2">Increased accumulation of methylthiooctyl glucosinolates in seeds.</text>
</comment>
<comment type="similarity">
    <text evidence="3">Belongs to the FMO family.</text>
</comment>
<feature type="chain" id="PRO_0000360995" description="Flavin-containing monooxygenase FMO GS-OX5">
    <location>
        <begin position="1"/>
        <end position="459"/>
    </location>
</feature>
<feature type="binding site" evidence="1">
    <location>
        <begin position="17"/>
        <end position="22"/>
    </location>
    <ligand>
        <name>FAD</name>
        <dbReference type="ChEBI" id="CHEBI:57692"/>
    </ligand>
</feature>
<feature type="binding site" evidence="1">
    <location>
        <begin position="212"/>
        <end position="217"/>
    </location>
    <ligand>
        <name>NADP(+)</name>
        <dbReference type="ChEBI" id="CHEBI:58349"/>
    </ligand>
</feature>
<feature type="splice variant" id="VSP_036206" description="In isoform 2." evidence="3">
    <location>
        <begin position="183"/>
        <end position="184"/>
    </location>
</feature>
<protein>
    <recommendedName>
        <fullName>Flavin-containing monooxygenase FMO GS-OX5</fullName>
        <ecNumber evidence="2">1.14.13.237</ecNumber>
    </recommendedName>
    <alternativeName>
        <fullName>Flavin-monooxygenase glucosinolate S-oxygenase 5</fullName>
    </alternativeName>
</protein>
<reference key="1">
    <citation type="journal article" date="2000" name="Nature">
        <title>Sequence and analysis of chromosome 1 of the plant Arabidopsis thaliana.</title>
        <authorList>
            <person name="Theologis A."/>
            <person name="Ecker J.R."/>
            <person name="Palm C.J."/>
            <person name="Federspiel N.A."/>
            <person name="Kaul S."/>
            <person name="White O."/>
            <person name="Alonso J."/>
            <person name="Altafi H."/>
            <person name="Araujo R."/>
            <person name="Bowman C.L."/>
            <person name="Brooks S.Y."/>
            <person name="Buehler E."/>
            <person name="Chan A."/>
            <person name="Chao Q."/>
            <person name="Chen H."/>
            <person name="Cheuk R.F."/>
            <person name="Chin C.W."/>
            <person name="Chung M.K."/>
            <person name="Conn L."/>
            <person name="Conway A.B."/>
            <person name="Conway A.R."/>
            <person name="Creasy T.H."/>
            <person name="Dewar K."/>
            <person name="Dunn P."/>
            <person name="Etgu P."/>
            <person name="Feldblyum T.V."/>
            <person name="Feng J.-D."/>
            <person name="Fong B."/>
            <person name="Fujii C.Y."/>
            <person name="Gill J.E."/>
            <person name="Goldsmith A.D."/>
            <person name="Haas B."/>
            <person name="Hansen N.F."/>
            <person name="Hughes B."/>
            <person name="Huizar L."/>
            <person name="Hunter J.L."/>
            <person name="Jenkins J."/>
            <person name="Johnson-Hopson C."/>
            <person name="Khan S."/>
            <person name="Khaykin E."/>
            <person name="Kim C.J."/>
            <person name="Koo H.L."/>
            <person name="Kremenetskaia I."/>
            <person name="Kurtz D.B."/>
            <person name="Kwan A."/>
            <person name="Lam B."/>
            <person name="Langin-Hooper S."/>
            <person name="Lee A."/>
            <person name="Lee J.M."/>
            <person name="Lenz C.A."/>
            <person name="Li J.H."/>
            <person name="Li Y.-P."/>
            <person name="Lin X."/>
            <person name="Liu S.X."/>
            <person name="Liu Z.A."/>
            <person name="Luros J.S."/>
            <person name="Maiti R."/>
            <person name="Marziali A."/>
            <person name="Militscher J."/>
            <person name="Miranda M."/>
            <person name="Nguyen M."/>
            <person name="Nierman W.C."/>
            <person name="Osborne B.I."/>
            <person name="Pai G."/>
            <person name="Peterson J."/>
            <person name="Pham P.K."/>
            <person name="Rizzo M."/>
            <person name="Rooney T."/>
            <person name="Rowley D."/>
            <person name="Sakano H."/>
            <person name="Salzberg S.L."/>
            <person name="Schwartz J.R."/>
            <person name="Shinn P."/>
            <person name="Southwick A.M."/>
            <person name="Sun H."/>
            <person name="Tallon L.J."/>
            <person name="Tambunga G."/>
            <person name="Toriumi M.J."/>
            <person name="Town C.D."/>
            <person name="Utterback T."/>
            <person name="Van Aken S."/>
            <person name="Vaysberg M."/>
            <person name="Vysotskaia V.S."/>
            <person name="Walker M."/>
            <person name="Wu D."/>
            <person name="Yu G."/>
            <person name="Fraser C.M."/>
            <person name="Venter J.C."/>
            <person name="Davis R.W."/>
        </authorList>
    </citation>
    <scope>NUCLEOTIDE SEQUENCE [LARGE SCALE GENOMIC DNA]</scope>
    <source>
        <strain>cv. Columbia</strain>
    </source>
</reference>
<reference key="2">
    <citation type="journal article" date="2017" name="Plant J.">
        <title>Araport11: a complete reannotation of the Arabidopsis thaliana reference genome.</title>
        <authorList>
            <person name="Cheng C.Y."/>
            <person name="Krishnakumar V."/>
            <person name="Chan A.P."/>
            <person name="Thibaud-Nissen F."/>
            <person name="Schobel S."/>
            <person name="Town C.D."/>
        </authorList>
    </citation>
    <scope>GENOME REANNOTATION</scope>
    <source>
        <strain>cv. Columbia</strain>
    </source>
</reference>
<reference key="3">
    <citation type="submission" date="2007-03" db="EMBL/GenBank/DDBJ databases">
        <title>Arabidopsis ORF clones.</title>
        <authorList>
            <person name="Kim C.J."/>
            <person name="Bautista V.R."/>
            <person name="Chen H."/>
            <person name="De Los Reyes C."/>
            <person name="Wu S.Y."/>
            <person name="Ecker J.R."/>
        </authorList>
    </citation>
    <scope>NUCLEOTIDE SEQUENCE [LARGE SCALE MRNA] (ISOFORM 1)</scope>
</reference>
<reference key="4">
    <citation type="journal article" date="2007" name="Plant J.">
        <title>Identification of a flavin-monooxygenase as the S-oxygenating enzyme in aliphatic glucosinolate biosynthesis in Arabidopsis.</title>
        <authorList>
            <person name="Hansen B.G."/>
            <person name="Kliebenstein D.J."/>
            <person name="Halkier B.A."/>
        </authorList>
    </citation>
    <scope>GENE FAMILY</scope>
    <source>
        <strain>cv. Columbia</strain>
    </source>
</reference>
<reference key="5">
    <citation type="journal article" date="2008" name="Plant Physiol.">
        <title>Subclade of flavin-monooxygenases involved in aliphatic glucosinolate biosynthesis.</title>
        <authorList>
            <person name="Li J."/>
            <person name="Hansen B.G."/>
            <person name="Ober J.A."/>
            <person name="Kliebenstein D.J."/>
            <person name="Halkier B.A."/>
        </authorList>
    </citation>
    <scope>FUNCTION</scope>
    <scope>CATALYTIC ACTIVITY</scope>
    <scope>DISRUPTION PHENOTYPE</scope>
    <source>
        <strain>cv. Columbia</strain>
    </source>
</reference>
<dbReference type="EC" id="1.14.13.237" evidence="2"/>
<dbReference type="EMBL" id="AC022522">
    <property type="protein sequence ID" value="AAG12579.1"/>
    <property type="molecule type" value="Genomic_DNA"/>
</dbReference>
<dbReference type="EMBL" id="CP002684">
    <property type="protein sequence ID" value="AEE28841.1"/>
    <property type="molecule type" value="Genomic_DNA"/>
</dbReference>
<dbReference type="EMBL" id="CP002684">
    <property type="protein sequence ID" value="AEE28842.1"/>
    <property type="molecule type" value="Genomic_DNA"/>
</dbReference>
<dbReference type="EMBL" id="CP002684">
    <property type="protein sequence ID" value="ANM60976.1"/>
    <property type="molecule type" value="Genomic_DNA"/>
</dbReference>
<dbReference type="EMBL" id="BT030387">
    <property type="protein sequence ID" value="ABO45690.1"/>
    <property type="molecule type" value="mRNA"/>
</dbReference>
<dbReference type="PIR" id="D86256">
    <property type="entry name" value="D86256"/>
</dbReference>
<dbReference type="RefSeq" id="NP_001077522.1">
    <molecule id="A8MRX0-2"/>
    <property type="nucleotide sequence ID" value="NM_001084053.1"/>
</dbReference>
<dbReference type="RefSeq" id="NP_001323223.1">
    <molecule id="A8MRX0-1"/>
    <property type="nucleotide sequence ID" value="NM_001332018.1"/>
</dbReference>
<dbReference type="RefSeq" id="NP_172678.3">
    <molecule id="A8MRX0-1"/>
    <property type="nucleotide sequence ID" value="NM_101086.5"/>
</dbReference>
<dbReference type="SMR" id="A8MRX0"/>
<dbReference type="FunCoup" id="A8MRX0">
    <property type="interactions" value="744"/>
</dbReference>
<dbReference type="STRING" id="3702.A8MRX0"/>
<dbReference type="PaxDb" id="3702-AT1G12140.1"/>
<dbReference type="ProteomicsDB" id="247298">
    <molecule id="A8MRX0-1"/>
</dbReference>
<dbReference type="EnsemblPlants" id="AT1G12140.1">
    <molecule id="A8MRX0-1"/>
    <property type="protein sequence ID" value="AT1G12140.1"/>
    <property type="gene ID" value="AT1G12140"/>
</dbReference>
<dbReference type="EnsemblPlants" id="AT1G12140.2">
    <molecule id="A8MRX0-2"/>
    <property type="protein sequence ID" value="AT1G12140.2"/>
    <property type="gene ID" value="AT1G12140"/>
</dbReference>
<dbReference type="EnsemblPlants" id="AT1G12140.3">
    <molecule id="A8MRX0-1"/>
    <property type="protein sequence ID" value="AT1G12140.3"/>
    <property type="gene ID" value="AT1G12140"/>
</dbReference>
<dbReference type="GeneID" id="837766"/>
<dbReference type="Gramene" id="AT1G12140.1">
    <molecule id="A8MRX0-1"/>
    <property type="protein sequence ID" value="AT1G12140.1"/>
    <property type="gene ID" value="AT1G12140"/>
</dbReference>
<dbReference type="Gramene" id="AT1G12140.2">
    <molecule id="A8MRX0-2"/>
    <property type="protein sequence ID" value="AT1G12140.2"/>
    <property type="gene ID" value="AT1G12140"/>
</dbReference>
<dbReference type="Gramene" id="AT1G12140.3">
    <molecule id="A8MRX0-1"/>
    <property type="protein sequence ID" value="AT1G12140.3"/>
    <property type="gene ID" value="AT1G12140"/>
</dbReference>
<dbReference type="KEGG" id="ath:AT1G12140"/>
<dbReference type="Araport" id="AT1G12140"/>
<dbReference type="TAIR" id="AT1G12140">
    <property type="gene designation" value="FMO GS-OX5"/>
</dbReference>
<dbReference type="eggNOG" id="KOG1399">
    <property type="taxonomic scope" value="Eukaryota"/>
</dbReference>
<dbReference type="HOGENOM" id="CLU_006909_3_0_1"/>
<dbReference type="InParanoid" id="A8MRX0"/>
<dbReference type="OMA" id="WHYDPIP"/>
<dbReference type="OrthoDB" id="66881at2759"/>
<dbReference type="PhylomeDB" id="A8MRX0"/>
<dbReference type="BioCyc" id="MetaCyc:AT1G12140-MONOMER"/>
<dbReference type="BRENDA" id="1.14.13.237">
    <property type="organism ID" value="399"/>
</dbReference>
<dbReference type="PRO" id="PR:A8MRX0"/>
<dbReference type="Proteomes" id="UP000006548">
    <property type="component" value="Chromosome 1"/>
</dbReference>
<dbReference type="ExpressionAtlas" id="A8MRX0">
    <property type="expression patterns" value="baseline and differential"/>
</dbReference>
<dbReference type="GO" id="GO:0080107">
    <property type="term" value="F:8-methylthiopropyl glucosinolate S-oxygenase activity"/>
    <property type="evidence" value="ECO:0000314"/>
    <property type="project" value="TAIR"/>
</dbReference>
<dbReference type="GO" id="GO:0050660">
    <property type="term" value="F:flavin adenine dinucleotide binding"/>
    <property type="evidence" value="ECO:0007669"/>
    <property type="project" value="InterPro"/>
</dbReference>
<dbReference type="GO" id="GO:0004497">
    <property type="term" value="F:monooxygenase activity"/>
    <property type="evidence" value="ECO:0000314"/>
    <property type="project" value="TAIR"/>
</dbReference>
<dbReference type="GO" id="GO:0004499">
    <property type="term" value="F:N,N-dimethylaniline monooxygenase activity"/>
    <property type="evidence" value="ECO:0000314"/>
    <property type="project" value="TAIR"/>
</dbReference>
<dbReference type="GO" id="GO:0050661">
    <property type="term" value="F:NADP binding"/>
    <property type="evidence" value="ECO:0007669"/>
    <property type="project" value="InterPro"/>
</dbReference>
<dbReference type="GO" id="GO:0048444">
    <property type="term" value="P:floral organ morphogenesis"/>
    <property type="evidence" value="ECO:0000316"/>
    <property type="project" value="TAIR"/>
</dbReference>
<dbReference type="GO" id="GO:0019761">
    <property type="term" value="P:glucosinolate biosynthetic process"/>
    <property type="evidence" value="ECO:0000315"/>
    <property type="project" value="TAIR"/>
</dbReference>
<dbReference type="GO" id="GO:0046885">
    <property type="term" value="P:regulation of hormone biosynthetic process"/>
    <property type="evidence" value="ECO:0000315"/>
    <property type="project" value="TAIR"/>
</dbReference>
<dbReference type="GO" id="GO:0046620">
    <property type="term" value="P:regulation of organ growth"/>
    <property type="evidence" value="ECO:0000315"/>
    <property type="project" value="TAIR"/>
</dbReference>
<dbReference type="FunFam" id="3.50.50.60:FF:000099">
    <property type="entry name" value="Flavin-containing monooxygenase"/>
    <property type="match status" value="1"/>
</dbReference>
<dbReference type="Gene3D" id="3.50.50.60">
    <property type="entry name" value="FAD/NAD(P)-binding domain"/>
    <property type="match status" value="2"/>
</dbReference>
<dbReference type="InterPro" id="IPR036188">
    <property type="entry name" value="FAD/NAD-bd_sf"/>
</dbReference>
<dbReference type="InterPro" id="IPR000960">
    <property type="entry name" value="Flavin_mOase"/>
</dbReference>
<dbReference type="InterPro" id="IPR020946">
    <property type="entry name" value="Flavin_mOase-like"/>
</dbReference>
<dbReference type="InterPro" id="IPR050346">
    <property type="entry name" value="FMO-like"/>
</dbReference>
<dbReference type="PANTHER" id="PTHR23023">
    <property type="entry name" value="DIMETHYLANILINE MONOOXYGENASE"/>
    <property type="match status" value="1"/>
</dbReference>
<dbReference type="Pfam" id="PF00743">
    <property type="entry name" value="FMO-like"/>
    <property type="match status" value="2"/>
</dbReference>
<dbReference type="PIRSF" id="PIRSF000332">
    <property type="entry name" value="FMO"/>
    <property type="match status" value="1"/>
</dbReference>
<dbReference type="PRINTS" id="PR00370">
    <property type="entry name" value="FMOXYGENASE"/>
</dbReference>
<dbReference type="SUPFAM" id="SSF51905">
    <property type="entry name" value="FAD/NAD(P)-binding domain"/>
    <property type="match status" value="2"/>
</dbReference>